<name>DHX36_MOUSE</name>
<feature type="chain" id="PRO_0000247531" description="ATP-dependent DNA/RNA helicase DHX36">
    <location>
        <begin position="1"/>
        <end position="1001"/>
    </location>
</feature>
<feature type="domain" description="Helicase ATP-binding" evidence="5">
    <location>
        <begin position="210"/>
        <end position="380"/>
    </location>
</feature>
<feature type="domain" description="Helicase C-terminal" evidence="6">
    <location>
        <begin position="470"/>
        <end position="640"/>
    </location>
</feature>
<feature type="region of interest" description="Necessary for nuclear and nucleolar caps localizations" evidence="3">
    <location>
        <begin position="1"/>
        <end position="193"/>
    </location>
</feature>
<feature type="region of interest" description="Required for the pre-miR-134 transport" evidence="1">
    <location>
        <begin position="1"/>
        <end position="97"/>
    </location>
</feature>
<feature type="region of interest" description="Disordered" evidence="7">
    <location>
        <begin position="1"/>
        <end position="54"/>
    </location>
</feature>
<feature type="region of interest" description="Required for recruitment to cytoplasmic stress granules" evidence="3">
    <location>
        <begin position="1"/>
        <end position="44"/>
    </location>
</feature>
<feature type="region of interest" description="Required for G4-DNA- and G4-RNA-binding" evidence="3">
    <location>
        <begin position="46"/>
        <end position="98"/>
    </location>
</feature>
<feature type="region of interest" description="DSM (DHX36-specific motif)" evidence="2 3">
    <location>
        <begin position="46"/>
        <end position="68"/>
    </location>
</feature>
<feature type="region of interest" description="RecA-like domain 1" evidence="2">
    <location>
        <begin position="99"/>
        <end position="379"/>
    </location>
</feature>
<feature type="region of interest" description="Necessary for interaction with single-stranded DNA at the 3'-end of the G4-DNA structure" evidence="2">
    <location>
        <begin position="258"/>
        <end position="310"/>
    </location>
</feature>
<feature type="region of interest" description="RecA-like domain 2" evidence="2">
    <location>
        <begin position="380"/>
        <end position="621"/>
    </location>
</feature>
<feature type="region of interest" description="Necessary for interaction with single-stranded DNA at the 3'-end of the G4-DNA structure" evidence="2">
    <location>
        <begin position="491"/>
        <end position="550"/>
    </location>
</feature>
<feature type="region of interest" description="WH domain" evidence="2">
    <location>
        <begin position="622"/>
        <end position="691"/>
    </location>
</feature>
<feature type="region of interest" description="Necessary for interaction with single-stranded DNA at the 3'-end of the G4-DNA structure" evidence="2">
    <location>
        <begin position="631"/>
        <end position="690"/>
    </location>
</feature>
<feature type="region of interest" description="OB-fold-like subdomains" evidence="2">
    <location>
        <begin position="834"/>
        <end position="898"/>
    </location>
</feature>
<feature type="region of interest" description="Necessary for interaction with single-stranded DNA at the 3'-end of the G4-DNA structure" evidence="2">
    <location>
        <begin position="842"/>
        <end position="853"/>
    </location>
</feature>
<feature type="region of interest" description="Necessary for interaction with single-stranded DNA at the 3'-end of the G4-DNA structure" evidence="2">
    <location>
        <begin position="863"/>
        <end position="893"/>
    </location>
</feature>
<feature type="coiled-coil region" evidence="4">
    <location>
        <begin position="120"/>
        <end position="147"/>
    </location>
</feature>
<feature type="short sequence motif" description="DEAH box" evidence="5">
    <location>
        <begin position="327"/>
        <end position="330"/>
    </location>
</feature>
<feature type="short sequence motif" description="Nuclear localization signal" evidence="3">
    <location>
        <begin position="510"/>
        <end position="521"/>
    </location>
</feature>
<feature type="compositionally biased region" description="Gly residues" evidence="7">
    <location>
        <begin position="15"/>
        <end position="41"/>
    </location>
</feature>
<feature type="binding site" evidence="2">
    <location>
        <begin position="226"/>
        <end position="231"/>
    </location>
    <ligand>
        <name>ATP</name>
        <dbReference type="ChEBI" id="CHEBI:30616"/>
    </ligand>
</feature>
<feature type="binding site" evidence="2">
    <location>
        <position position="328"/>
    </location>
    <ligand>
        <name>Mg(2+)</name>
        <dbReference type="ChEBI" id="CHEBI:18420"/>
    </ligand>
</feature>
<feature type="binding site" evidence="2">
    <location>
        <position position="330"/>
    </location>
    <ligand>
        <name>Mg(2+)</name>
        <dbReference type="ChEBI" id="CHEBI:18420"/>
    </ligand>
</feature>
<feature type="binding site" evidence="2">
    <location>
        <position position="550"/>
    </location>
    <ligand>
        <name>ATP</name>
        <dbReference type="ChEBI" id="CHEBI:30616"/>
    </ligand>
</feature>
<feature type="binding site" evidence="2">
    <location>
        <begin position="595"/>
        <end position="598"/>
    </location>
    <ligand>
        <name>ATP</name>
        <dbReference type="ChEBI" id="CHEBI:30616"/>
    </ligand>
</feature>
<feature type="modified residue" description="Phosphoserine" evidence="3">
    <location>
        <position position="154"/>
    </location>
</feature>
<feature type="modified residue" description="N6-acetyllysine" evidence="3">
    <location>
        <position position="940"/>
    </location>
</feature>
<feature type="modified residue" description="Phosphoserine" evidence="3">
    <location>
        <position position="956"/>
    </location>
</feature>
<feature type="sequence conflict" description="In Ref. 4; BAC98183." evidence="14" ref="4">
    <location>
        <position position="29"/>
    </location>
</feature>
<feature type="sequence conflict" description="In Ref. 4; BAC98183." evidence="14" ref="4">
    <original>S</original>
    <variation>T</variation>
    <location>
        <position position="160"/>
    </location>
</feature>
<feature type="sequence conflict" description="In Ref. 1; AAL47006." evidence="14" ref="1">
    <original>E</original>
    <variation>K</variation>
    <location>
        <position position="984"/>
    </location>
</feature>
<feature type="helix" evidence="18">
    <location>
        <begin position="155"/>
        <end position="157"/>
    </location>
</feature>
<feature type="helix" evidence="16">
    <location>
        <begin position="161"/>
        <end position="164"/>
    </location>
</feature>
<feature type="helix" evidence="16">
    <location>
        <begin position="171"/>
        <end position="185"/>
    </location>
</feature>
<feature type="helix" evidence="16">
    <location>
        <begin position="188"/>
        <end position="198"/>
    </location>
</feature>
<feature type="helix" evidence="16">
    <location>
        <begin position="201"/>
        <end position="204"/>
    </location>
</feature>
<feature type="helix" evidence="16">
    <location>
        <begin position="206"/>
        <end position="215"/>
    </location>
</feature>
<feature type="strand" evidence="16">
    <location>
        <begin position="217"/>
        <end position="223"/>
    </location>
</feature>
<feature type="helix" evidence="16">
    <location>
        <begin position="229"/>
        <end position="243"/>
    </location>
</feature>
<feature type="helix" evidence="16">
    <location>
        <begin position="247"/>
        <end position="249"/>
    </location>
</feature>
<feature type="strand" evidence="16">
    <location>
        <begin position="251"/>
        <end position="258"/>
    </location>
</feature>
<feature type="helix" evidence="16">
    <location>
        <begin position="259"/>
        <end position="272"/>
    </location>
</feature>
<feature type="strand" evidence="16">
    <location>
        <begin position="281"/>
        <end position="287"/>
    </location>
</feature>
<feature type="strand" evidence="16">
    <location>
        <begin position="290"/>
        <end position="292"/>
    </location>
</feature>
<feature type="strand" evidence="16">
    <location>
        <begin position="296"/>
        <end position="304"/>
    </location>
</feature>
<feature type="helix" evidence="16">
    <location>
        <begin position="305"/>
        <end position="314"/>
    </location>
</feature>
<feature type="strand" evidence="16">
    <location>
        <begin position="322"/>
        <end position="326"/>
    </location>
</feature>
<feature type="helix" evidence="16">
    <location>
        <begin position="329"/>
        <end position="331"/>
    </location>
</feature>
<feature type="helix" evidence="16">
    <location>
        <begin position="334"/>
        <end position="349"/>
    </location>
</feature>
<feature type="strand" evidence="16">
    <location>
        <begin position="354"/>
        <end position="362"/>
    </location>
</feature>
<feature type="helix" evidence="16">
    <location>
        <begin position="365"/>
        <end position="370"/>
    </location>
</feature>
<feature type="strand" evidence="16">
    <location>
        <begin position="376"/>
        <end position="379"/>
    </location>
</feature>
<feature type="strand" evidence="16">
    <location>
        <begin position="386"/>
        <end position="389"/>
    </location>
</feature>
<feature type="helix" evidence="16">
    <location>
        <begin position="391"/>
        <end position="398"/>
    </location>
</feature>
<feature type="helix" evidence="17">
    <location>
        <begin position="404"/>
        <end position="407"/>
    </location>
</feature>
<feature type="helix" evidence="18">
    <location>
        <begin position="414"/>
        <end position="417"/>
    </location>
</feature>
<feature type="helix" evidence="16">
    <location>
        <begin position="423"/>
        <end position="446"/>
    </location>
</feature>
<feature type="helix" evidence="16">
    <location>
        <begin position="449"/>
        <end position="457"/>
    </location>
</feature>
<feature type="strand" evidence="16">
    <location>
        <begin position="460"/>
        <end position="462"/>
    </location>
</feature>
<feature type="helix" evidence="16">
    <location>
        <begin position="465"/>
        <end position="478"/>
    </location>
</feature>
<feature type="strand" evidence="16">
    <location>
        <begin position="483"/>
        <end position="487"/>
    </location>
</feature>
<feature type="helix" evidence="16">
    <location>
        <begin position="491"/>
        <end position="502"/>
    </location>
</feature>
<feature type="helix" evidence="16">
    <location>
        <begin position="505"/>
        <end position="508"/>
    </location>
</feature>
<feature type="strand" evidence="16">
    <location>
        <begin position="512"/>
        <end position="517"/>
    </location>
</feature>
<feature type="turn" evidence="17">
    <location>
        <begin position="526"/>
        <end position="528"/>
    </location>
</feature>
<feature type="strand" evidence="18">
    <location>
        <begin position="529"/>
        <end position="531"/>
    </location>
</feature>
<feature type="strand" evidence="16">
    <location>
        <begin position="537"/>
        <end position="543"/>
    </location>
</feature>
<feature type="helix" evidence="16">
    <location>
        <begin position="545"/>
        <end position="548"/>
    </location>
</feature>
<feature type="strand" evidence="16">
    <location>
        <begin position="556"/>
        <end position="561"/>
    </location>
</feature>
<feature type="strand" evidence="16">
    <location>
        <begin position="564"/>
        <end position="571"/>
    </location>
</feature>
<feature type="turn" evidence="16">
    <location>
        <begin position="572"/>
        <end position="575"/>
    </location>
</feature>
<feature type="strand" evidence="16">
    <location>
        <begin position="576"/>
        <end position="583"/>
    </location>
</feature>
<feature type="helix" evidence="16">
    <location>
        <begin position="586"/>
        <end position="594"/>
    </location>
</feature>
<feature type="strand" evidence="16">
    <location>
        <begin position="597"/>
        <end position="608"/>
    </location>
</feature>
<feature type="helix" evidence="16">
    <location>
        <begin position="610"/>
        <end position="614"/>
    </location>
</feature>
<feature type="helix" evidence="16">
    <location>
        <begin position="623"/>
        <end position="626"/>
    </location>
</feature>
<feature type="helix" evidence="16">
    <location>
        <begin position="630"/>
        <end position="638"/>
    </location>
</feature>
<feature type="helix" evidence="16">
    <location>
        <begin position="644"/>
        <end position="649"/>
    </location>
</feature>
<feature type="strand" evidence="16">
    <location>
        <begin position="651"/>
        <end position="653"/>
    </location>
</feature>
<feature type="helix" evidence="16">
    <location>
        <begin position="657"/>
        <end position="669"/>
    </location>
</feature>
<feature type="helix" evidence="16">
    <location>
        <begin position="681"/>
        <end position="687"/>
    </location>
</feature>
<feature type="strand" evidence="16">
    <location>
        <begin position="689"/>
        <end position="691"/>
    </location>
</feature>
<feature type="helix" evidence="16">
    <location>
        <begin position="693"/>
        <end position="704"/>
    </location>
</feature>
<feature type="helix" evidence="16">
    <location>
        <begin position="708"/>
        <end position="719"/>
    </location>
</feature>
<feature type="helix" evidence="16">
    <location>
        <begin position="731"/>
        <end position="742"/>
    </location>
</feature>
<feature type="helix" evidence="16">
    <location>
        <begin position="748"/>
        <end position="764"/>
    </location>
</feature>
<feature type="helix" evidence="16">
    <location>
        <begin position="767"/>
        <end position="777"/>
    </location>
</feature>
<feature type="helix" evidence="16">
    <location>
        <begin position="781"/>
        <end position="800"/>
    </location>
</feature>
<feature type="strand" evidence="18">
    <location>
        <begin position="805"/>
        <end position="807"/>
    </location>
</feature>
<feature type="helix" evidence="16">
    <location>
        <begin position="812"/>
        <end position="814"/>
    </location>
</feature>
<feature type="turn" evidence="16">
    <location>
        <begin position="816"/>
        <end position="819"/>
    </location>
</feature>
<feature type="helix" evidence="16">
    <location>
        <begin position="821"/>
        <end position="832"/>
    </location>
</feature>
<feature type="strand" evidence="16">
    <location>
        <begin position="836"/>
        <end position="839"/>
    </location>
</feature>
<feature type="strand" evidence="16">
    <location>
        <begin position="851"/>
        <end position="854"/>
    </location>
</feature>
<feature type="turn" evidence="16">
    <location>
        <begin position="855"/>
        <end position="857"/>
    </location>
</feature>
<feature type="strand" evidence="16">
    <location>
        <begin position="858"/>
        <end position="862"/>
    </location>
</feature>
<feature type="turn" evidence="16">
    <location>
        <begin position="867"/>
        <end position="870"/>
    </location>
</feature>
<feature type="strand" evidence="16">
    <location>
        <begin position="875"/>
        <end position="882"/>
    </location>
</feature>
<feature type="strand" evidence="16">
    <location>
        <begin position="884"/>
        <end position="892"/>
    </location>
</feature>
<feature type="strand" evidence="16">
    <location>
        <begin position="894"/>
        <end position="898"/>
    </location>
</feature>
<feature type="helix" evidence="16">
    <location>
        <begin position="900"/>
        <end position="906"/>
    </location>
</feature>
<feature type="strand" evidence="16">
    <location>
        <begin position="910"/>
        <end position="913"/>
    </location>
</feature>
<feature type="turn" evidence="17">
    <location>
        <begin position="915"/>
        <end position="917"/>
    </location>
</feature>
<feature type="strand" evidence="16">
    <location>
        <begin position="920"/>
        <end position="923"/>
    </location>
</feature>
<feature type="turn" evidence="16">
    <location>
        <begin position="924"/>
        <end position="926"/>
    </location>
</feature>
<feature type="strand" evidence="16">
    <location>
        <begin position="927"/>
        <end position="930"/>
    </location>
</feature>
<feature type="helix" evidence="16">
    <location>
        <begin position="933"/>
        <end position="955"/>
    </location>
</feature>
<feature type="helix" evidence="16">
    <location>
        <begin position="969"/>
        <end position="980"/>
    </location>
</feature>
<comment type="function">
    <text evidence="1 2 3 8 9 10 11 12">Multifunctional ATP-dependent helicase that unwinds G-quadruplex (G4) structures (PubMed:25611385). Plays a role in many biological processes such as genomic integrity, gene expression regulations and as a sensor to initiate antiviral responses (PubMed:21590736, PubMed:21703541). G4 structures correspond to helical structures containing guanine tetrads (By similarity). Binds with high affinity to and unwinds G4 structures that are formed in nucleic acids (G4-DNA and G4-RNA) (By similarity). Plays a role in genomic integrity (By similarity). Converts the G4-RNA structure present in telomerase RNA template component (TREC) into a double-stranded RNA to promote P1 helix formation that acts as a template boundary ensuring accurate reverse transcription (By similarity). Plays a role in transcriptional regulation. Resolves G4-DNA structures in promoters of genes, such as YY1, KIT/c-kit and ALPL and positively regulates their expression (By similarity) (PubMed:25611385). Plays a role in post-transcriptional regulation (By similarity). Unwinds a G4-RNA structure located in the 3'-UTR polyadenylation site of the pre-mRNA TP53 and stimulates TP53 pre-mRNA 3'-end processing in response to ultraviolet (UV)-induced DNA damage (By similarity). Binds to the precursor-microRNA-134 (pre-miR-134) terminal loop and regulates its transport into the synapto-dendritic compartment (By similarity). Involved in the pre-miR-134-dependent inhibition of target gene expression and the control of dendritic spine size (By similarity). Plays a role in the regulation of cytoplasmic mRNA translation and mRNA stability (By similarity). Binds to both G4-RNA structures and alternative non-quadruplex-forming sequence within the 3'-UTR of the PITX1 mRNA regulating negatively PITX1 protein expression (By similarity). Binds to both G4-RNA structure in the 5'-UTR and AU-rich elements (AREs) localized in the 3'-UTR of NKX2-5 mRNA to either stimulate protein translation or induce mRNA decay in an ELAVL1-dependent manner, respectively (By similarity). Also binds to ARE sequences present in several mRNAs mediating exosome-mediated 3'-5' mRNA degradation (By similarity). Involved in cytoplasmic urokinase-type plasminogen activator (uPA) mRNA decay (By similarity). Component of a multi-helicase-TICAM1 complex that acts as a cytoplasmic sensor of viral double-stranded RNA (dsRNA) and plays a role in the activation of a cascade of antiviral responses including the induction of pro-inflammatory cytokines via the adapter molecule TICAM1 (PubMed:21703541). Required for the early embryonic development and hematopoiesis (PubMed:22422825). Involved in the regulation of cardioblast differentiation and proliferation during heart development (PubMed:26489465). Involved in spermatogonia differentiation (PubMed:25611385). May play a role in ossification (PubMed:21590736).</text>
</comment>
<comment type="catalytic activity">
    <reaction evidence="3">
        <text>ATP + H2O = ADP + phosphate + H(+)</text>
        <dbReference type="Rhea" id="RHEA:13065"/>
        <dbReference type="ChEBI" id="CHEBI:15377"/>
        <dbReference type="ChEBI" id="CHEBI:15378"/>
        <dbReference type="ChEBI" id="CHEBI:30616"/>
        <dbReference type="ChEBI" id="CHEBI:43474"/>
        <dbReference type="ChEBI" id="CHEBI:456216"/>
        <dbReference type="EC" id="3.6.4.13"/>
    </reaction>
</comment>
<comment type="cofactor">
    <cofactor evidence="2">
        <name>Mg(2+)</name>
        <dbReference type="ChEBI" id="CHEBI:18420"/>
    </cofactor>
</comment>
<comment type="activity regulation">
    <text evidence="3">ATPase activity is enhanced in the presence of homomeric poly(U) RNAs, but not by double-stranded DNA (dsDNA), double-stranded RNA (dsRNA) and tRNA.</text>
</comment>
<comment type="subunit">
    <text evidence="3 8 9">Found in a multi-helicase-TICAM1 complex at least composed of DHX36, DDX1, DDX21 and TICAM1; this complex exists in resting cells with or without dsRNA poly(I:C) ligand stimulation (PubMed:21703541). Interacts (via C-terminus) with TICAM1 (via TIR domain) (PubMed:21703541). Interacts (via C-terminus) with DDX21; this interaction serves as bridges to TICAM1 (PubMed:21703541). Interacts with TERT; this interaction is dependent on the ability of DHX36 to bind to the G-quadruplex RNA (G4-RNA) structure present in the telomerase RNA template component (TERC). Interacts with DKC1; this interaction is dependent on the ability of DHX36 to bind to the G4-RNA structure present in TERC. Interacts with PARN; this interaction stimulates PARN to enhance uPA mRNA decay. Interacts with EXOSC3; this interaction occurs in a RNase-insensitive manner. Interacts with EXOSC10; this interaction occurs in a RNase-insensitive manner. Interacts with ILF3; this interaction occurs in a RNA-dependent manner. Interacts with ELAVL1; this interaction occurs in an RNA-dependent manner. Interacts with DDX5; this interaction occurs in a RNA-dependent manner. Interacts with DDX17; this interaction occurs in a RNA-dependent manner. Interacts with HDAC1; this interaction occurs in a RNA-dependent manner (By similarity) (PubMed:21590736). Interacts with HDAC3; this interaction occurs in a RNA-dependent manner (By similarity). Interacts with HDAC4 (PubMed:21590736). Interacts with AGO1. Interacts with AGO2 (By similarity). Interacts with ERCC6 (By similarity).</text>
</comment>
<comment type="subcellular location">
    <subcellularLocation>
        <location evidence="3">Nucleus</location>
    </subcellularLocation>
    <subcellularLocation>
        <location evidence="3">Cytoplasm</location>
    </subcellularLocation>
    <subcellularLocation>
        <location evidence="9">Cytoplasm</location>
        <location evidence="9">Cytosol</location>
    </subcellularLocation>
    <subcellularLocation>
        <location evidence="3">Cytoplasm</location>
        <location evidence="3">Stress granule</location>
    </subcellularLocation>
    <subcellularLocation>
        <location evidence="3">Nucleus speckle</location>
    </subcellularLocation>
    <subcellularLocation>
        <location evidence="3">Chromosome</location>
        <location evidence="3">Telomere</location>
    </subcellularLocation>
    <subcellularLocation>
        <location evidence="9">Mitochondrion</location>
    </subcellularLocation>
    <subcellularLocation>
        <location evidence="1">Perikaryon</location>
    </subcellularLocation>
    <subcellularLocation>
        <location evidence="1">Cell projection</location>
        <location evidence="1">Dendrite</location>
    </subcellularLocation>
    <subcellularLocation>
        <location evidence="1">Cell projection</location>
        <location evidence="1">Axon</location>
    </subcellularLocation>
    <text evidence="3 9">Predominantly localized in the nucleus. Colocalizes with SRSF2 in nuclear speckles. Colocalizes with DDX5 in nucleolar caps upon transcription inhibition. Accumulates and colocalized with TIA1 in cytoplasmic stress granules (SGs) in an arsenite-, heat shock- and RNA-binding-dependent manner. Shuttles into and out of SGs in an ATPase-dependent manner (By similarity). Colocalizes in the cytosol with the multi-helicase-TICAM1 complex that translocates to the mitochondria upon poly(I:C) stimulation (PubMed:21703541).</text>
</comment>
<comment type="tissue specificity">
    <text evidence="11">Expressed in spermatogonia stem cells and primary spermatocytes (at protein level) (PubMed:25611385). Expressed strongly in testis. Weakly expressed in heart, lung, liver, kidney, small intestine, spleen, lymphe node and thymus (PubMed:25611385).</text>
</comment>
<comment type="developmental stage">
    <text evidence="11 12">Expressed in the embryonic heart at 10.5 and increases from 14.5 to 16.5 dpc, and then gradually decreases until postnal day 7 (PubMed:26489465). Expressed during the testicular development from embryonic day 18.5 to postnatal day 35 (PubMed:25611385).</text>
</comment>
<comment type="domain">
    <text evidence="2 3">The DHX36-specific motif (DSM) form folds into a DNA-binding-induced alpha-helix that together with the oligonucleotide and oligosaccharide-binding-fold-like (OB-fold-like) subdomain bind to Myc-promoter G4-DNA-containing structure in an ATP-dependent manner. Upon G4-DNA-binding, DHX36 pulls on DSM in the 3'-direction, inducing rearrangement of the RecA-like 1 and 2 and the degenerate-winged-helix (WH) regions; these rearrangements are propbably responsible for the ATP-independent repetitive G4-DNA unfolding activity, one residue at a time. Upon resolving of G4-DNA into separate nucleotide strands, and ATP hydrolysis, the apoprotein of DHX36 seems incompatible with G4-DNA-binding (By similarity). The N-terminus is necessary for its recruitment to cytoplasmic stress granules (SGs) upon arsenite-induced treatment (By similarity).</text>
</comment>
<comment type="disruption phenotype">
    <text evidence="10 11 12">Mice die at around embryonic 7 days post-coitum (dpc). Conditional knockout mice in the hematopoeitic system leads to hemolytic anemia, a reduction in blood platelet and erythroblast development (PubMed:22422825). Cardiac progenitor-cell-specific knockout mice die around 12.5 dpc and lead to abnormal cardiovascular development with a reduction in cardiomyocyte proliferation. Mice display increased NKX2-5 mRNA but decreased NKX2-5 protein levels, respectively, in the heart at 12.5 dpc compared to wild-type mice (PubMed:26489465). Male germ-cell-specific knockout mice lead to testicular hypoplasia development, due to spermatogonia differentiation block, meiosis initiation arrest as early as meiosis I stage and an absence of mature sperm in the epididymis (PubMed:25611385). Mice show several alteration in meiosis-related gene expression such as the differentiating spermatogonia markers KIT/c-kit (PubMed:25611385).</text>
</comment>
<comment type="similarity">
    <text evidence="14">Belongs to the DEAD box helicase family. DEAH subfamily.</text>
</comment>
<organism>
    <name type="scientific">Mus musculus</name>
    <name type="common">Mouse</name>
    <dbReference type="NCBI Taxonomy" id="10090"/>
    <lineage>
        <taxon>Eukaryota</taxon>
        <taxon>Metazoa</taxon>
        <taxon>Chordata</taxon>
        <taxon>Craniata</taxon>
        <taxon>Vertebrata</taxon>
        <taxon>Euteleostomi</taxon>
        <taxon>Mammalia</taxon>
        <taxon>Eutheria</taxon>
        <taxon>Euarchontoglires</taxon>
        <taxon>Glires</taxon>
        <taxon>Rodentia</taxon>
        <taxon>Myomorpha</taxon>
        <taxon>Muroidea</taxon>
        <taxon>Muridae</taxon>
        <taxon>Murinae</taxon>
        <taxon>Mus</taxon>
        <taxon>Mus</taxon>
    </lineage>
</organism>
<keyword id="KW-0002">3D-structure</keyword>
<keyword id="KW-0007">Acetylation</keyword>
<keyword id="KW-0010">Activator</keyword>
<keyword id="KW-0051">Antiviral defense</keyword>
<keyword id="KW-0067">ATP-binding</keyword>
<keyword id="KW-0966">Cell projection</keyword>
<keyword id="KW-0158">Chromosome</keyword>
<keyword id="KW-0175">Coiled coil</keyword>
<keyword id="KW-0963">Cytoplasm</keyword>
<keyword id="KW-0217">Developmental protein</keyword>
<keyword id="KW-0221">Differentiation</keyword>
<keyword id="KW-0238">DNA-binding</keyword>
<keyword id="KW-0347">Helicase</keyword>
<keyword id="KW-0378">Hydrolase</keyword>
<keyword id="KW-0391">Immunity</keyword>
<keyword id="KW-0399">Innate immunity</keyword>
<keyword id="KW-0460">Magnesium</keyword>
<keyword id="KW-0479">Metal-binding</keyword>
<keyword id="KW-0496">Mitochondrion</keyword>
<keyword id="KW-0547">Nucleotide-binding</keyword>
<keyword id="KW-0539">Nucleus</keyword>
<keyword id="KW-0597">Phosphoprotein</keyword>
<keyword id="KW-1185">Reference proteome</keyword>
<keyword id="KW-0677">Repeat</keyword>
<keyword id="KW-0678">Repressor</keyword>
<keyword id="KW-0694">RNA-binding</keyword>
<keyword id="KW-0779">Telomere</keyword>
<keyword id="KW-0804">Transcription</keyword>
<keyword id="KW-0805">Transcription regulation</keyword>
<keyword id="KW-0810">Translation regulation</keyword>
<keyword id="KW-0813">Transport</keyword>
<accession>Q8VHK9</accession>
<accession>G3X8Y4</accession>
<accession>Q6ZPP7</accession>
<accession>Q9CSE8</accession>
<evidence type="ECO:0000250" key="1">
    <source>
        <dbReference type="UniProtKB" id="D4A2Z8"/>
    </source>
</evidence>
<evidence type="ECO:0000250" key="2">
    <source>
        <dbReference type="UniProtKB" id="Q05B79"/>
    </source>
</evidence>
<evidence type="ECO:0000250" key="3">
    <source>
        <dbReference type="UniProtKB" id="Q9H2U1"/>
    </source>
</evidence>
<evidence type="ECO:0000255" key="4"/>
<evidence type="ECO:0000255" key="5">
    <source>
        <dbReference type="PROSITE-ProRule" id="PRU00541"/>
    </source>
</evidence>
<evidence type="ECO:0000255" key="6">
    <source>
        <dbReference type="PROSITE-ProRule" id="PRU00542"/>
    </source>
</evidence>
<evidence type="ECO:0000256" key="7">
    <source>
        <dbReference type="SAM" id="MobiDB-lite"/>
    </source>
</evidence>
<evidence type="ECO:0000269" key="8">
    <source>
    </source>
</evidence>
<evidence type="ECO:0000269" key="9">
    <source>
    </source>
</evidence>
<evidence type="ECO:0000269" key="10">
    <source>
    </source>
</evidence>
<evidence type="ECO:0000269" key="11">
    <source>
    </source>
</evidence>
<evidence type="ECO:0000269" key="12">
    <source>
    </source>
</evidence>
<evidence type="ECO:0000303" key="13">
    <source>
    </source>
</evidence>
<evidence type="ECO:0000305" key="14"/>
<evidence type="ECO:0000312" key="15">
    <source>
        <dbReference type="MGI" id="MGI:1919412"/>
    </source>
</evidence>
<evidence type="ECO:0007829" key="16">
    <source>
        <dbReference type="PDB" id="6UP2"/>
    </source>
</evidence>
<evidence type="ECO:0007829" key="17">
    <source>
        <dbReference type="PDB" id="6UP3"/>
    </source>
</evidence>
<evidence type="ECO:0007829" key="18">
    <source>
        <dbReference type="PDB" id="6UP4"/>
    </source>
</evidence>
<dbReference type="EC" id="3.6.4.13" evidence="3"/>
<dbReference type="EMBL" id="AF448804">
    <property type="protein sequence ID" value="AAL47006.1"/>
    <property type="molecule type" value="mRNA"/>
</dbReference>
<dbReference type="EMBL" id="AC114424">
    <property type="status" value="NOT_ANNOTATED_CDS"/>
    <property type="molecule type" value="Genomic_DNA"/>
</dbReference>
<dbReference type="EMBL" id="CH466530">
    <property type="protein sequence ID" value="EDL35384.1"/>
    <property type="molecule type" value="Genomic_DNA"/>
</dbReference>
<dbReference type="EMBL" id="AK129373">
    <property type="protein sequence ID" value="BAC98183.1"/>
    <property type="molecule type" value="mRNA"/>
</dbReference>
<dbReference type="EMBL" id="AK013031">
    <property type="protein sequence ID" value="BAB28610.1"/>
    <property type="molecule type" value="mRNA"/>
</dbReference>
<dbReference type="CCDS" id="CCDS17379.1"/>
<dbReference type="RefSeq" id="NP_082412.2">
    <property type="nucleotide sequence ID" value="NM_028136.3"/>
</dbReference>
<dbReference type="RefSeq" id="XP_011238540.1">
    <property type="nucleotide sequence ID" value="XM_011240238.1"/>
</dbReference>
<dbReference type="PDB" id="6UP2">
    <property type="method" value="X-ray"/>
    <property type="resolution" value="1.97 A"/>
    <property type="chains" value="A=153-982"/>
</dbReference>
<dbReference type="PDB" id="6UP3">
    <property type="method" value="X-ray"/>
    <property type="resolution" value="2.69 A"/>
    <property type="chains" value="A=153-982"/>
</dbReference>
<dbReference type="PDB" id="6UP4">
    <property type="method" value="X-ray"/>
    <property type="resolution" value="2.40 A"/>
    <property type="chains" value="A=153-982"/>
</dbReference>
<dbReference type="PDBsum" id="6UP2"/>
<dbReference type="PDBsum" id="6UP3"/>
<dbReference type="PDBsum" id="6UP4"/>
<dbReference type="SMR" id="Q8VHK9"/>
<dbReference type="BioGRID" id="215193">
    <property type="interactions" value="12"/>
</dbReference>
<dbReference type="CORUM" id="Q8VHK9"/>
<dbReference type="DIP" id="DIP-48576N"/>
<dbReference type="FunCoup" id="Q8VHK9">
    <property type="interactions" value="4093"/>
</dbReference>
<dbReference type="IntAct" id="Q8VHK9">
    <property type="interactions" value="3"/>
</dbReference>
<dbReference type="STRING" id="10090.ENSMUSP00000029336"/>
<dbReference type="GlyGen" id="Q8VHK9">
    <property type="glycosylation" value="1 site, 1 O-linked glycan (1 site)"/>
</dbReference>
<dbReference type="iPTMnet" id="Q8VHK9"/>
<dbReference type="PhosphoSitePlus" id="Q8VHK9"/>
<dbReference type="SwissPalm" id="Q8VHK9"/>
<dbReference type="PaxDb" id="10090-ENSMUSP00000029336"/>
<dbReference type="PeptideAtlas" id="Q8VHK9"/>
<dbReference type="ProteomicsDB" id="279655"/>
<dbReference type="Pumba" id="Q8VHK9"/>
<dbReference type="Antibodypedia" id="33625">
    <property type="antibodies" value="173 antibodies from 27 providers"/>
</dbReference>
<dbReference type="DNASU" id="72162"/>
<dbReference type="Ensembl" id="ENSMUST00000029336.6">
    <property type="protein sequence ID" value="ENSMUSP00000029336.5"/>
    <property type="gene ID" value="ENSMUSG00000027770.6"/>
</dbReference>
<dbReference type="GeneID" id="72162"/>
<dbReference type="KEGG" id="mmu:72162"/>
<dbReference type="UCSC" id="uc008pjn.2">
    <property type="organism name" value="mouse"/>
</dbReference>
<dbReference type="AGR" id="MGI:1919412"/>
<dbReference type="CTD" id="170506"/>
<dbReference type="MGI" id="MGI:1919412">
    <property type="gene designation" value="Dhx36"/>
</dbReference>
<dbReference type="VEuPathDB" id="HostDB:ENSMUSG00000027770"/>
<dbReference type="eggNOG" id="KOG0920">
    <property type="taxonomic scope" value="Eukaryota"/>
</dbReference>
<dbReference type="GeneTree" id="ENSGT00940000156903"/>
<dbReference type="HOGENOM" id="CLU_001832_1_4_1"/>
<dbReference type="InParanoid" id="Q8VHK9"/>
<dbReference type="OMA" id="WLQSDKH"/>
<dbReference type="OrthoDB" id="5600252at2759"/>
<dbReference type="PhylomeDB" id="Q8VHK9"/>
<dbReference type="TreeFam" id="TF324744"/>
<dbReference type="Reactome" id="R-MMU-3134963">
    <property type="pathway name" value="DEx/H-box helicases activate type I IFN and inflammatory cytokines production"/>
</dbReference>
<dbReference type="BioGRID-ORCS" id="72162">
    <property type="hits" value="33 hits in 85 CRISPR screens"/>
</dbReference>
<dbReference type="ChiTaRS" id="Dhx36">
    <property type="organism name" value="mouse"/>
</dbReference>
<dbReference type="PRO" id="PR:Q8VHK9"/>
<dbReference type="Proteomes" id="UP000000589">
    <property type="component" value="Chromosome 3"/>
</dbReference>
<dbReference type="RNAct" id="Q8VHK9">
    <property type="molecule type" value="protein"/>
</dbReference>
<dbReference type="Bgee" id="ENSMUSG00000027770">
    <property type="expression patterns" value="Expressed in ventromedial nucleus of hypothalamus and 259 other cell types or tissues"/>
</dbReference>
<dbReference type="GO" id="GO:0030424">
    <property type="term" value="C:axon"/>
    <property type="evidence" value="ECO:0000250"/>
    <property type="project" value="UniProtKB"/>
</dbReference>
<dbReference type="GO" id="GO:0000781">
    <property type="term" value="C:chromosome, telomeric region"/>
    <property type="evidence" value="ECO:0000250"/>
    <property type="project" value="UniProtKB"/>
</dbReference>
<dbReference type="GO" id="GO:0005737">
    <property type="term" value="C:cytoplasm"/>
    <property type="evidence" value="ECO:0000250"/>
    <property type="project" value="UniProtKB"/>
</dbReference>
<dbReference type="GO" id="GO:0010494">
    <property type="term" value="C:cytoplasmic stress granule"/>
    <property type="evidence" value="ECO:0000250"/>
    <property type="project" value="UniProtKB"/>
</dbReference>
<dbReference type="GO" id="GO:0005829">
    <property type="term" value="C:cytosol"/>
    <property type="evidence" value="ECO:0000314"/>
    <property type="project" value="UniProtKB"/>
</dbReference>
<dbReference type="GO" id="GO:0030425">
    <property type="term" value="C:dendrite"/>
    <property type="evidence" value="ECO:0000250"/>
    <property type="project" value="UniProtKB"/>
</dbReference>
<dbReference type="GO" id="GO:0005739">
    <property type="term" value="C:mitochondrion"/>
    <property type="evidence" value="ECO:0000303"/>
    <property type="project" value="UniProtKB"/>
</dbReference>
<dbReference type="GO" id="GO:0016607">
    <property type="term" value="C:nuclear speck"/>
    <property type="evidence" value="ECO:0000250"/>
    <property type="project" value="UniProtKB"/>
</dbReference>
<dbReference type="GO" id="GO:0005634">
    <property type="term" value="C:nucleus"/>
    <property type="evidence" value="ECO:0000250"/>
    <property type="project" value="UniProtKB"/>
</dbReference>
<dbReference type="GO" id="GO:0043204">
    <property type="term" value="C:perikaryon"/>
    <property type="evidence" value="ECO:0000250"/>
    <property type="project" value="UniProtKB"/>
</dbReference>
<dbReference type="GO" id="GO:0005524">
    <property type="term" value="F:ATP binding"/>
    <property type="evidence" value="ECO:0000250"/>
    <property type="project" value="UniProtKB"/>
</dbReference>
<dbReference type="GO" id="GO:0016887">
    <property type="term" value="F:ATP hydrolysis activity"/>
    <property type="evidence" value="ECO:0007669"/>
    <property type="project" value="RHEA"/>
</dbReference>
<dbReference type="GO" id="GO:0008094">
    <property type="term" value="F:ATP-dependent activity, acting on DNA"/>
    <property type="evidence" value="ECO:0000250"/>
    <property type="project" value="UniProtKB"/>
</dbReference>
<dbReference type="GO" id="GO:0140640">
    <property type="term" value="F:catalytic activity, acting on a nucleic acid"/>
    <property type="evidence" value="ECO:0000314"/>
    <property type="project" value="UniProtKB"/>
</dbReference>
<dbReference type="GO" id="GO:0003678">
    <property type="term" value="F:DNA helicase activity"/>
    <property type="evidence" value="ECO:0000315"/>
    <property type="project" value="UniProtKB"/>
</dbReference>
<dbReference type="GO" id="GO:0003725">
    <property type="term" value="F:double-stranded RNA binding"/>
    <property type="evidence" value="ECO:0000314"/>
    <property type="project" value="MGI"/>
</dbReference>
<dbReference type="GO" id="GO:0051880">
    <property type="term" value="F:G-quadruplex DNA binding"/>
    <property type="evidence" value="ECO:0000314"/>
    <property type="project" value="UniProtKB"/>
</dbReference>
<dbReference type="GO" id="GO:0002151">
    <property type="term" value="F:G-quadruplex RNA binding"/>
    <property type="evidence" value="ECO:0000250"/>
    <property type="project" value="UniProtKB"/>
</dbReference>
<dbReference type="GO" id="GO:0042826">
    <property type="term" value="F:histone deacetylase binding"/>
    <property type="evidence" value="ECO:0000314"/>
    <property type="project" value="UniProtKB"/>
</dbReference>
<dbReference type="GO" id="GO:0000287">
    <property type="term" value="F:magnesium ion binding"/>
    <property type="evidence" value="ECO:0000250"/>
    <property type="project" value="UniProtKB"/>
</dbReference>
<dbReference type="GO" id="GO:0035925">
    <property type="term" value="F:mRNA 3'-UTR AU-rich region binding"/>
    <property type="evidence" value="ECO:0000250"/>
    <property type="project" value="UniProtKB"/>
</dbReference>
<dbReference type="GO" id="GO:0003730">
    <property type="term" value="F:mRNA 3'-UTR binding"/>
    <property type="evidence" value="ECO:0000250"/>
    <property type="project" value="UniProtKB"/>
</dbReference>
<dbReference type="GO" id="GO:0048027">
    <property type="term" value="F:mRNA 5'-UTR binding"/>
    <property type="evidence" value="ECO:0000250"/>
    <property type="project" value="UniProtKB"/>
</dbReference>
<dbReference type="GO" id="GO:0070883">
    <property type="term" value="F:pre-miRNA binding"/>
    <property type="evidence" value="ECO:0000250"/>
    <property type="project" value="UniProtKB"/>
</dbReference>
<dbReference type="GO" id="GO:0003724">
    <property type="term" value="F:RNA helicase activity"/>
    <property type="evidence" value="ECO:0000250"/>
    <property type="project" value="UniProtKB"/>
</dbReference>
<dbReference type="GO" id="GO:0000978">
    <property type="term" value="F:RNA polymerase II cis-regulatory region sequence-specific DNA binding"/>
    <property type="evidence" value="ECO:0000314"/>
    <property type="project" value="UniProtKB"/>
</dbReference>
<dbReference type="GO" id="GO:0003697">
    <property type="term" value="F:single-stranded DNA binding"/>
    <property type="evidence" value="ECO:0007669"/>
    <property type="project" value="Ensembl"/>
</dbReference>
<dbReference type="GO" id="GO:0070034">
    <property type="term" value="F:telomerase RNA binding"/>
    <property type="evidence" value="ECO:0000250"/>
    <property type="project" value="UniProtKB"/>
</dbReference>
<dbReference type="GO" id="GO:0000976">
    <property type="term" value="F:transcription cis-regulatory region binding"/>
    <property type="evidence" value="ECO:0000314"/>
    <property type="project" value="UniProtKB"/>
</dbReference>
<dbReference type="GO" id="GO:0061158">
    <property type="term" value="P:3'-UTR-mediated mRNA destabilization"/>
    <property type="evidence" value="ECO:0000250"/>
    <property type="project" value="UniProtKB"/>
</dbReference>
<dbReference type="GO" id="GO:0030154">
    <property type="term" value="P:cell differentiation"/>
    <property type="evidence" value="ECO:0007669"/>
    <property type="project" value="UniProtKB-KW"/>
</dbReference>
<dbReference type="GO" id="GO:1903843">
    <property type="term" value="P:cellular response to arsenite ion"/>
    <property type="evidence" value="ECO:0000250"/>
    <property type="project" value="UniProtKB"/>
</dbReference>
<dbReference type="GO" id="GO:0034605">
    <property type="term" value="P:cellular response to heat"/>
    <property type="evidence" value="ECO:0000250"/>
    <property type="project" value="UniProtKB"/>
</dbReference>
<dbReference type="GO" id="GO:0034644">
    <property type="term" value="P:cellular response to UV"/>
    <property type="evidence" value="ECO:0000250"/>
    <property type="project" value="UniProtKB"/>
</dbReference>
<dbReference type="GO" id="GO:0051607">
    <property type="term" value="P:defense response to virus"/>
    <property type="evidence" value="ECO:0007669"/>
    <property type="project" value="UniProtKB-KW"/>
</dbReference>
<dbReference type="GO" id="GO:0045087">
    <property type="term" value="P:innate immune response"/>
    <property type="evidence" value="ECO:0007669"/>
    <property type="project" value="UniProtKB-KW"/>
</dbReference>
<dbReference type="GO" id="GO:0017148">
    <property type="term" value="P:negative regulation of translation"/>
    <property type="evidence" value="ECO:0000250"/>
    <property type="project" value="UniProtKB"/>
</dbReference>
<dbReference type="GO" id="GO:0001503">
    <property type="term" value="P:ossification"/>
    <property type="evidence" value="ECO:0000315"/>
    <property type="project" value="UniProtKB"/>
</dbReference>
<dbReference type="GO" id="GO:0043123">
    <property type="term" value="P:positive regulation of canonical NF-kappaB signal transduction"/>
    <property type="evidence" value="ECO:0000315"/>
    <property type="project" value="UniProtKB"/>
</dbReference>
<dbReference type="GO" id="GO:0051891">
    <property type="term" value="P:positive regulation of cardioblast differentiation"/>
    <property type="evidence" value="ECO:0000315"/>
    <property type="project" value="UniProtKB"/>
</dbReference>
<dbReference type="GO" id="GO:2000767">
    <property type="term" value="P:positive regulation of cytoplasmic translation"/>
    <property type="evidence" value="ECO:0000250"/>
    <property type="project" value="UniProtKB"/>
</dbReference>
<dbReference type="GO" id="GO:0061003">
    <property type="term" value="P:positive regulation of dendritic spine morphogenesis"/>
    <property type="evidence" value="ECO:0000250"/>
    <property type="project" value="UniProtKB"/>
</dbReference>
<dbReference type="GO" id="GO:1901534">
    <property type="term" value="P:positive regulation of hematopoietic progenitor cell differentiation"/>
    <property type="evidence" value="ECO:0000315"/>
    <property type="project" value="UniProtKB"/>
</dbReference>
<dbReference type="GO" id="GO:0032727">
    <property type="term" value="P:positive regulation of interferon-alpha production"/>
    <property type="evidence" value="ECO:0007669"/>
    <property type="project" value="Ensembl"/>
</dbReference>
<dbReference type="GO" id="GO:1904582">
    <property type="term" value="P:positive regulation of intracellular mRNA localization"/>
    <property type="evidence" value="ECO:0000250"/>
    <property type="project" value="UniProtKB"/>
</dbReference>
<dbReference type="GO" id="GO:0031442">
    <property type="term" value="P:positive regulation of mRNA 3'-end processing"/>
    <property type="evidence" value="ECO:0000250"/>
    <property type="project" value="UniProtKB"/>
</dbReference>
<dbReference type="GO" id="GO:0002735">
    <property type="term" value="P:positive regulation of myeloid dendritic cell cytokine production"/>
    <property type="evidence" value="ECO:0000315"/>
    <property type="project" value="UniProtKB"/>
</dbReference>
<dbReference type="GO" id="GO:1900153">
    <property type="term" value="P:positive regulation of nuclear-transcribed mRNA catabolic process, deadenylation-dependent decay"/>
    <property type="evidence" value="ECO:0000250"/>
    <property type="project" value="UniProtKB"/>
</dbReference>
<dbReference type="GO" id="GO:0032206">
    <property type="term" value="P:positive regulation of telomere maintenance"/>
    <property type="evidence" value="ECO:0000250"/>
    <property type="project" value="UniProtKB"/>
</dbReference>
<dbReference type="GO" id="GO:1904358">
    <property type="term" value="P:positive regulation of telomere maintenance via telomere lengthening"/>
    <property type="evidence" value="ECO:0000250"/>
    <property type="project" value="UniProtKB"/>
</dbReference>
<dbReference type="GO" id="GO:0045944">
    <property type="term" value="P:positive regulation of transcription by RNA polymerase II"/>
    <property type="evidence" value="ECO:0000314"/>
    <property type="project" value="UniProtKB"/>
</dbReference>
<dbReference type="GO" id="GO:0060261">
    <property type="term" value="P:positive regulation of transcription initiation by RNA polymerase II"/>
    <property type="evidence" value="ECO:0000250"/>
    <property type="project" value="UniProtKB"/>
</dbReference>
<dbReference type="GO" id="GO:0045995">
    <property type="term" value="P:regulation of embryonic development"/>
    <property type="evidence" value="ECO:0000315"/>
    <property type="project" value="UniProtKB"/>
</dbReference>
<dbReference type="GO" id="GO:0043488">
    <property type="term" value="P:regulation of mRNA stability"/>
    <property type="evidence" value="ECO:0000250"/>
    <property type="project" value="UniProtKB"/>
</dbReference>
<dbReference type="GO" id="GO:0006359">
    <property type="term" value="P:regulation of transcription by RNA polymerase III"/>
    <property type="evidence" value="ECO:0000250"/>
    <property type="project" value="UniProtKB"/>
</dbReference>
<dbReference type="GO" id="GO:0043330">
    <property type="term" value="P:response to exogenous dsRNA"/>
    <property type="evidence" value="ECO:0000315"/>
    <property type="project" value="MGI"/>
</dbReference>
<dbReference type="GO" id="GO:0009615">
    <property type="term" value="P:response to virus"/>
    <property type="evidence" value="ECO:0000315"/>
    <property type="project" value="MGI"/>
</dbReference>
<dbReference type="GO" id="GO:0007283">
    <property type="term" value="P:spermatogenesis"/>
    <property type="evidence" value="ECO:0000314"/>
    <property type="project" value="UniProtKB"/>
</dbReference>
<dbReference type="GO" id="GO:0090669">
    <property type="term" value="P:telomerase RNA stabilization"/>
    <property type="evidence" value="ECO:0007669"/>
    <property type="project" value="Ensembl"/>
</dbReference>
<dbReference type="CDD" id="cd17981">
    <property type="entry name" value="DEXHc_DHX36"/>
    <property type="match status" value="1"/>
</dbReference>
<dbReference type="CDD" id="cd18791">
    <property type="entry name" value="SF2_C_RHA"/>
    <property type="match status" value="1"/>
</dbReference>
<dbReference type="FunFam" id="1.20.120.1080:FF:000002">
    <property type="entry name" value="Putative ATP-dependent RNA helicase DHX36"/>
    <property type="match status" value="1"/>
</dbReference>
<dbReference type="FunFam" id="3.40.50.300:FF:000670">
    <property type="entry name" value="Putative ATP-dependent RNA helicase DHX36"/>
    <property type="match status" value="1"/>
</dbReference>
<dbReference type="FunFam" id="3.40.50.300:FF:000739">
    <property type="entry name" value="Putative ATP-dependent RNA helicase DHX36"/>
    <property type="match status" value="1"/>
</dbReference>
<dbReference type="Gene3D" id="1.20.120.1080">
    <property type="match status" value="1"/>
</dbReference>
<dbReference type="Gene3D" id="3.40.50.300">
    <property type="entry name" value="P-loop containing nucleotide triphosphate hydrolases"/>
    <property type="match status" value="2"/>
</dbReference>
<dbReference type="InterPro" id="IPR011709">
    <property type="entry name" value="DEAD-box_helicase_OB_fold"/>
</dbReference>
<dbReference type="InterPro" id="IPR011545">
    <property type="entry name" value="DEAD/DEAH_box_helicase_dom"/>
</dbReference>
<dbReference type="InterPro" id="IPR002464">
    <property type="entry name" value="DNA/RNA_helicase_DEAH_CS"/>
</dbReference>
<dbReference type="InterPro" id="IPR048333">
    <property type="entry name" value="HA2_WH"/>
</dbReference>
<dbReference type="InterPro" id="IPR007502">
    <property type="entry name" value="Helicase-assoc_dom"/>
</dbReference>
<dbReference type="InterPro" id="IPR014001">
    <property type="entry name" value="Helicase_ATP-bd"/>
</dbReference>
<dbReference type="InterPro" id="IPR001650">
    <property type="entry name" value="Helicase_C-like"/>
</dbReference>
<dbReference type="InterPro" id="IPR027417">
    <property type="entry name" value="P-loop_NTPase"/>
</dbReference>
<dbReference type="PANTHER" id="PTHR18934:SF237">
    <property type="entry name" value="ATP-DEPENDENT DNA_RNA HELICASE DHX36"/>
    <property type="match status" value="1"/>
</dbReference>
<dbReference type="PANTHER" id="PTHR18934">
    <property type="entry name" value="ATP-DEPENDENT RNA HELICASE"/>
    <property type="match status" value="1"/>
</dbReference>
<dbReference type="Pfam" id="PF00270">
    <property type="entry name" value="DEAD"/>
    <property type="match status" value="1"/>
</dbReference>
<dbReference type="Pfam" id="PF21010">
    <property type="entry name" value="HA2_C"/>
    <property type="match status" value="1"/>
</dbReference>
<dbReference type="Pfam" id="PF04408">
    <property type="entry name" value="HA2_N"/>
    <property type="match status" value="1"/>
</dbReference>
<dbReference type="Pfam" id="PF00271">
    <property type="entry name" value="Helicase_C"/>
    <property type="match status" value="1"/>
</dbReference>
<dbReference type="Pfam" id="PF07717">
    <property type="entry name" value="OB_NTP_bind"/>
    <property type="match status" value="1"/>
</dbReference>
<dbReference type="SMART" id="SM00487">
    <property type="entry name" value="DEXDc"/>
    <property type="match status" value="1"/>
</dbReference>
<dbReference type="SMART" id="SM00847">
    <property type="entry name" value="HA2"/>
    <property type="match status" value="1"/>
</dbReference>
<dbReference type="SMART" id="SM00490">
    <property type="entry name" value="HELICc"/>
    <property type="match status" value="1"/>
</dbReference>
<dbReference type="SUPFAM" id="SSF52540">
    <property type="entry name" value="P-loop containing nucleoside triphosphate hydrolases"/>
    <property type="match status" value="1"/>
</dbReference>
<dbReference type="PROSITE" id="PS00690">
    <property type="entry name" value="DEAH_ATP_HELICASE"/>
    <property type="match status" value="1"/>
</dbReference>
<dbReference type="PROSITE" id="PS51192">
    <property type="entry name" value="HELICASE_ATP_BIND_1"/>
    <property type="match status" value="1"/>
</dbReference>
<dbReference type="PROSITE" id="PS51194">
    <property type="entry name" value="HELICASE_CTER"/>
    <property type="match status" value="1"/>
</dbReference>
<reference key="1">
    <citation type="journal article" date="2002" name="Sheng Wu Hua Xue Yu Sheng Wu Wu Li Xue Bao">
        <title>Molecular cloning and characterization of human DDX36 and mouse Ddx36 genes, new members of the DEAD/H box superfamily.</title>
        <authorList>
            <person name="Fu J.-J."/>
            <person name="Li L.-Y."/>
            <person name="Lu G.-X."/>
        </authorList>
    </citation>
    <scope>NUCLEOTIDE SEQUENCE [MRNA]</scope>
    <source>
        <strain>C57BL/6J</strain>
    </source>
</reference>
<reference key="2">
    <citation type="journal article" date="2009" name="PLoS Biol.">
        <title>Lineage-specific biology revealed by a finished genome assembly of the mouse.</title>
        <authorList>
            <person name="Church D.M."/>
            <person name="Goodstadt L."/>
            <person name="Hillier L.W."/>
            <person name="Zody M.C."/>
            <person name="Goldstein S."/>
            <person name="She X."/>
            <person name="Bult C.J."/>
            <person name="Agarwala R."/>
            <person name="Cherry J.L."/>
            <person name="DiCuccio M."/>
            <person name="Hlavina W."/>
            <person name="Kapustin Y."/>
            <person name="Meric P."/>
            <person name="Maglott D."/>
            <person name="Birtle Z."/>
            <person name="Marques A.C."/>
            <person name="Graves T."/>
            <person name="Zhou S."/>
            <person name="Teague B."/>
            <person name="Potamousis K."/>
            <person name="Churas C."/>
            <person name="Place M."/>
            <person name="Herschleb J."/>
            <person name="Runnheim R."/>
            <person name="Forrest D."/>
            <person name="Amos-Landgraf J."/>
            <person name="Schwartz D.C."/>
            <person name="Cheng Z."/>
            <person name="Lindblad-Toh K."/>
            <person name="Eichler E.E."/>
            <person name="Ponting C.P."/>
        </authorList>
    </citation>
    <scope>NUCLEOTIDE SEQUENCE [LARGE SCALE GENOMIC DNA]</scope>
    <source>
        <strain>C57BL/6J</strain>
    </source>
</reference>
<reference key="3">
    <citation type="submission" date="2005-07" db="EMBL/GenBank/DDBJ databases">
        <authorList>
            <person name="Mural R.J."/>
            <person name="Adams M.D."/>
            <person name="Myers E.W."/>
            <person name="Smith H.O."/>
            <person name="Venter J.C."/>
        </authorList>
    </citation>
    <scope>NUCLEOTIDE SEQUENCE [LARGE SCALE GENOMIC DNA]</scope>
</reference>
<reference key="4">
    <citation type="journal article" date="2003" name="DNA Res.">
        <title>Prediction of the coding sequences of mouse homologues of KIAA gene: III. The complete nucleotide sequences of 500 mouse KIAA-homologous cDNAs identified by screening of terminal sequences of cDNA clones randomly sampled from size-fractionated libraries.</title>
        <authorList>
            <person name="Okazaki N."/>
            <person name="Kikuno R."/>
            <person name="Ohara R."/>
            <person name="Inamoto S."/>
            <person name="Koseki H."/>
            <person name="Hiraoka S."/>
            <person name="Saga Y."/>
            <person name="Nagase T."/>
            <person name="Ohara O."/>
            <person name="Koga H."/>
        </authorList>
    </citation>
    <scope>NUCLEOTIDE SEQUENCE [LARGE SCALE MRNA] OF 1-422</scope>
    <source>
        <tissue>Embryonic tail</tissue>
    </source>
</reference>
<reference key="5">
    <citation type="journal article" date="2005" name="Science">
        <title>The transcriptional landscape of the mammalian genome.</title>
        <authorList>
            <person name="Carninci P."/>
            <person name="Kasukawa T."/>
            <person name="Katayama S."/>
            <person name="Gough J."/>
            <person name="Frith M.C."/>
            <person name="Maeda N."/>
            <person name="Oyama R."/>
            <person name="Ravasi T."/>
            <person name="Lenhard B."/>
            <person name="Wells C."/>
            <person name="Kodzius R."/>
            <person name="Shimokawa K."/>
            <person name="Bajic V.B."/>
            <person name="Brenner S.E."/>
            <person name="Batalov S."/>
            <person name="Forrest A.R."/>
            <person name="Zavolan M."/>
            <person name="Davis M.J."/>
            <person name="Wilming L.G."/>
            <person name="Aidinis V."/>
            <person name="Allen J.E."/>
            <person name="Ambesi-Impiombato A."/>
            <person name="Apweiler R."/>
            <person name="Aturaliya R.N."/>
            <person name="Bailey T.L."/>
            <person name="Bansal M."/>
            <person name="Baxter L."/>
            <person name="Beisel K.W."/>
            <person name="Bersano T."/>
            <person name="Bono H."/>
            <person name="Chalk A.M."/>
            <person name="Chiu K.P."/>
            <person name="Choudhary V."/>
            <person name="Christoffels A."/>
            <person name="Clutterbuck D.R."/>
            <person name="Crowe M.L."/>
            <person name="Dalla E."/>
            <person name="Dalrymple B.P."/>
            <person name="de Bono B."/>
            <person name="Della Gatta G."/>
            <person name="di Bernardo D."/>
            <person name="Down T."/>
            <person name="Engstrom P."/>
            <person name="Fagiolini M."/>
            <person name="Faulkner G."/>
            <person name="Fletcher C.F."/>
            <person name="Fukushima T."/>
            <person name="Furuno M."/>
            <person name="Futaki S."/>
            <person name="Gariboldi M."/>
            <person name="Georgii-Hemming P."/>
            <person name="Gingeras T.R."/>
            <person name="Gojobori T."/>
            <person name="Green R.E."/>
            <person name="Gustincich S."/>
            <person name="Harbers M."/>
            <person name="Hayashi Y."/>
            <person name="Hensch T.K."/>
            <person name="Hirokawa N."/>
            <person name="Hill D."/>
            <person name="Huminiecki L."/>
            <person name="Iacono M."/>
            <person name="Ikeo K."/>
            <person name="Iwama A."/>
            <person name="Ishikawa T."/>
            <person name="Jakt M."/>
            <person name="Kanapin A."/>
            <person name="Katoh M."/>
            <person name="Kawasawa Y."/>
            <person name="Kelso J."/>
            <person name="Kitamura H."/>
            <person name="Kitano H."/>
            <person name="Kollias G."/>
            <person name="Krishnan S.P."/>
            <person name="Kruger A."/>
            <person name="Kummerfeld S.K."/>
            <person name="Kurochkin I.V."/>
            <person name="Lareau L.F."/>
            <person name="Lazarevic D."/>
            <person name="Lipovich L."/>
            <person name="Liu J."/>
            <person name="Liuni S."/>
            <person name="McWilliam S."/>
            <person name="Madan Babu M."/>
            <person name="Madera M."/>
            <person name="Marchionni L."/>
            <person name="Matsuda H."/>
            <person name="Matsuzawa S."/>
            <person name="Miki H."/>
            <person name="Mignone F."/>
            <person name="Miyake S."/>
            <person name="Morris K."/>
            <person name="Mottagui-Tabar S."/>
            <person name="Mulder N."/>
            <person name="Nakano N."/>
            <person name="Nakauchi H."/>
            <person name="Ng P."/>
            <person name="Nilsson R."/>
            <person name="Nishiguchi S."/>
            <person name="Nishikawa S."/>
            <person name="Nori F."/>
            <person name="Ohara O."/>
            <person name="Okazaki Y."/>
            <person name="Orlando V."/>
            <person name="Pang K.C."/>
            <person name="Pavan W.J."/>
            <person name="Pavesi G."/>
            <person name="Pesole G."/>
            <person name="Petrovsky N."/>
            <person name="Piazza S."/>
            <person name="Reed J."/>
            <person name="Reid J.F."/>
            <person name="Ring B.Z."/>
            <person name="Ringwald M."/>
            <person name="Rost B."/>
            <person name="Ruan Y."/>
            <person name="Salzberg S.L."/>
            <person name="Sandelin A."/>
            <person name="Schneider C."/>
            <person name="Schoenbach C."/>
            <person name="Sekiguchi K."/>
            <person name="Semple C.A."/>
            <person name="Seno S."/>
            <person name="Sessa L."/>
            <person name="Sheng Y."/>
            <person name="Shibata Y."/>
            <person name="Shimada H."/>
            <person name="Shimada K."/>
            <person name="Silva D."/>
            <person name="Sinclair B."/>
            <person name="Sperling S."/>
            <person name="Stupka E."/>
            <person name="Sugiura K."/>
            <person name="Sultana R."/>
            <person name="Takenaka Y."/>
            <person name="Taki K."/>
            <person name="Tammoja K."/>
            <person name="Tan S.L."/>
            <person name="Tang S."/>
            <person name="Taylor M.S."/>
            <person name="Tegner J."/>
            <person name="Teichmann S.A."/>
            <person name="Ueda H.R."/>
            <person name="van Nimwegen E."/>
            <person name="Verardo R."/>
            <person name="Wei C.L."/>
            <person name="Yagi K."/>
            <person name="Yamanishi H."/>
            <person name="Zabarovsky E."/>
            <person name="Zhu S."/>
            <person name="Zimmer A."/>
            <person name="Hide W."/>
            <person name="Bult C."/>
            <person name="Grimmond S.M."/>
            <person name="Teasdale R.D."/>
            <person name="Liu E.T."/>
            <person name="Brusic V."/>
            <person name="Quackenbush J."/>
            <person name="Wahlestedt C."/>
            <person name="Mattick J.S."/>
            <person name="Hume D.A."/>
            <person name="Kai C."/>
            <person name="Sasaki D."/>
            <person name="Tomaru Y."/>
            <person name="Fukuda S."/>
            <person name="Kanamori-Katayama M."/>
            <person name="Suzuki M."/>
            <person name="Aoki J."/>
            <person name="Arakawa T."/>
            <person name="Iida J."/>
            <person name="Imamura K."/>
            <person name="Itoh M."/>
            <person name="Kato T."/>
            <person name="Kawaji H."/>
            <person name="Kawagashira N."/>
            <person name="Kawashima T."/>
            <person name="Kojima M."/>
            <person name="Kondo S."/>
            <person name="Konno H."/>
            <person name="Nakano K."/>
            <person name="Ninomiya N."/>
            <person name="Nishio T."/>
            <person name="Okada M."/>
            <person name="Plessy C."/>
            <person name="Shibata K."/>
            <person name="Shiraki T."/>
            <person name="Suzuki S."/>
            <person name="Tagami M."/>
            <person name="Waki K."/>
            <person name="Watahiki A."/>
            <person name="Okamura-Oho Y."/>
            <person name="Suzuki H."/>
            <person name="Kawai J."/>
            <person name="Hayashizaki Y."/>
        </authorList>
    </citation>
    <scope>NUCLEOTIDE SEQUENCE [LARGE SCALE MRNA] OF 321-1001</scope>
    <source>
        <strain>C57BL/6J</strain>
        <tissue>Embryo</tissue>
    </source>
</reference>
<reference key="6">
    <citation type="journal article" date="2006" name="Mol. Cell. Proteomics">
        <title>Comprehensive identification of phosphorylation sites in postsynaptic density preparations.</title>
        <authorList>
            <person name="Trinidad J.C."/>
            <person name="Specht C.G."/>
            <person name="Thalhammer A."/>
            <person name="Schoepfer R."/>
            <person name="Burlingame A.L."/>
        </authorList>
    </citation>
    <scope>IDENTIFICATION BY MASS SPECTROMETRY [LARGE SCALE ANALYSIS]</scope>
    <source>
        <tissue>Brain</tissue>
    </source>
</reference>
<reference key="7">
    <citation type="journal article" date="2010" name="Cell">
        <title>A tissue-specific atlas of mouse protein phosphorylation and expression.</title>
        <authorList>
            <person name="Huttlin E.L."/>
            <person name="Jedrychowski M.P."/>
            <person name="Elias J.E."/>
            <person name="Goswami T."/>
            <person name="Rad R."/>
            <person name="Beausoleil S.A."/>
            <person name="Villen J."/>
            <person name="Haas W."/>
            <person name="Sowa M.E."/>
            <person name="Gygi S.P."/>
        </authorList>
    </citation>
    <scope>IDENTIFICATION BY MASS SPECTROMETRY [LARGE SCALE ANALYSIS]</scope>
    <source>
        <tissue>Brain</tissue>
        <tissue>Brown adipose tissue</tissue>
        <tissue>Kidney</tissue>
        <tissue>Liver</tissue>
        <tissue>Lung</tissue>
        <tissue>Pancreas</tissue>
        <tissue>Spleen</tissue>
        <tissue>Testis</tissue>
    </source>
</reference>
<reference key="8">
    <citation type="journal article" date="2011" name="Immunity">
        <title>DDX1, DDX21, and DHX36 helicases form a complex with the adaptor molecule TRIF to sense dsRNA in dendritic cells.</title>
        <authorList>
            <person name="Zhang Z."/>
            <person name="Kim T."/>
            <person name="Bao M."/>
            <person name="Facchinetti V."/>
            <person name="Jung S.Y."/>
            <person name="Ghaffari A.A."/>
            <person name="Qin J."/>
            <person name="Cheng G."/>
            <person name="Liu Y.J."/>
        </authorList>
    </citation>
    <scope>FUNCTION</scope>
    <scope>INTERACTION WITH TICAM1; DDX1 AND DDX21</scope>
    <scope>IDENTIFICATION IN A COMPLEX WITH DDX1; DDX21 AND TICAM1</scope>
    <scope>SUBCELLULAR LOCATION</scope>
    <scope>IDENTIFICATION BY MASS SPECTROMETRY</scope>
</reference>
<reference key="9">
    <citation type="journal article" date="2011" name="J. Bone Miner. Res.">
        <title>Histone deacetylase inhibitor MS-275 stimulates bone formation in part by enhancing Dhx36-mediated TNAP transcription.</title>
        <authorList>
            <person name="Kim H.N."/>
            <person name="Lee J.H."/>
            <person name="Bae S.C."/>
            <person name="Ryoo H.M."/>
            <person name="Kim H.H."/>
            <person name="Ha H."/>
            <person name="Lee Z.H."/>
        </authorList>
    </citation>
    <scope>FUNCTION</scope>
    <scope>INTERACTION WITH HDAC1 AND HDAC4</scope>
    <scope>IDENTIFICATION BY MASS SPECTROMETRY</scope>
</reference>
<reference key="10">
    <citation type="journal article" date="2012" name="Blood">
        <title>The DEAH-box helicase RHAU is an essential gene and critical for mouse hematopoiesis.</title>
        <authorList>
            <person name="Lai J.C."/>
            <person name="Ponti S."/>
            <person name="Pan D."/>
            <person name="Kohler H."/>
            <person name="Skoda R.C."/>
            <person name="Matthias P."/>
            <person name="Nagamine Y."/>
        </authorList>
    </citation>
    <scope>FUNCTION</scope>
    <scope>DISRUPTION PHENOTYPE</scope>
</reference>
<reference key="11">
    <citation type="journal article" date="2015" name="Cell Death Dis.">
        <title>A G-quadruplex DNA structure resolvase, RHAU, is essential for spermatogonia differentiation.</title>
        <authorList>
            <person name="Gao X."/>
            <person name="Ma W."/>
            <person name="Nie J."/>
            <person name="Zhang C."/>
            <person name="Zhang J."/>
            <person name="Yao G."/>
            <person name="Han J."/>
            <person name="Xu J."/>
            <person name="Hu B."/>
            <person name="Du Y."/>
            <person name="Shi Q."/>
            <person name="Yang Z."/>
            <person name="Huang X."/>
            <person name="Zhang Y."/>
        </authorList>
    </citation>
    <scope>FUNCTION</scope>
    <scope>G-QUADRUPLEX DNA-BINDING</scope>
    <scope>TISSUE SPECIFICITY</scope>
    <scope>DEVELOPMENTAL STAGE</scope>
    <scope>DISRUPTION PHENOTYPE</scope>
</reference>
<reference key="12">
    <citation type="journal article" date="2015" name="Cell Rep.">
        <title>Post-transcriptional Regulation of Nkx2-5 by RHAU in Heart Development.</title>
        <authorList>
            <person name="Nie J."/>
            <person name="Jiang M."/>
            <person name="Zhang X."/>
            <person name="Tang H."/>
            <person name="Jin H."/>
            <person name="Huang X."/>
            <person name="Yuan B."/>
            <person name="Zhang C."/>
            <person name="Lai J.C."/>
            <person name="Nagamine Y."/>
            <person name="Pan D."/>
            <person name="Wang W."/>
            <person name="Yang Z."/>
        </authorList>
    </citation>
    <scope>FUNCTION</scope>
    <scope>DEVELOPMENTAL STAGE</scope>
    <scope>DISRUPTION PHENOTYPE</scope>
</reference>
<protein>
    <recommendedName>
        <fullName evidence="14">ATP-dependent DNA/RNA helicase DHX36</fullName>
        <ecNumber evidence="3">3.6.4.13</ecNumber>
    </recommendedName>
    <alternativeName>
        <fullName evidence="13">DEAD/H box polypeptide 36</fullName>
    </alternativeName>
    <alternativeName>
        <fullName evidence="14">DEAH box protein 36</fullName>
    </alternativeName>
    <alternativeName>
        <fullName evidence="3">MLE-like protein 1</fullName>
    </alternativeName>
    <alternativeName>
        <fullName evidence="3">RNA helicase associated with AU-rich element ARE</fullName>
    </alternativeName>
</protein>
<gene>
    <name evidence="15" type="primary">Dhx36</name>
    <name evidence="3" type="synonym">Ddx36</name>
    <name type="synonym">Kiaa1488</name>
    <name evidence="3" type="synonym">Mlel1</name>
</gene>
<proteinExistence type="evidence at protein level"/>
<sequence length="1001" mass="113883">MSYDYHQSWSRDGGPRGSGQGSSGGGGGGSRGSGGGGGGRGGRGRHPAHLKGREIGLWYAKKQTQKNKEAERQERAVVHMDERREEQIVQLLNSVQAKTDKDSEAQISWFAPEDHGYGTEVSSEKKINSEKKLDNQEKKLLNQEKKTFRITDKSYIDRDSEYLLQENEPNLSLDQHLLEDLQRKKTDPRYIEMQRFRKKLPSYGMQKELVNLINNHQVTVISGETGCGKTTQVTQFILDNYIERGKGSACRIVCTQPRRISAISVAERVATERAESCGNGNSTGYQIRLQSRLPRKQGSILYCTTGIILQWLQSDSRLSSVSHIVLDEIHERNLQSDVLMTVIKDLLHFRSDLKVILMSATLNAEKFSEYFGNCPMIHIPGFTFPVVEYLLEDIIEKIRYVPDQKEHRSQFKRGFMQGHVNRQEKEEKEAIYKERWPAYIKELRTRYSASTVDVLQMMDDDKVDLNLIAALIRYIVLEEEDGAILVFLPGWDNISTLHDLLMSQVMFKSDKFLIIPLHSLMPTVNQTQVFKKTPPGVRKIVIATNIAETSITIDDVVYVIDGGKIKETHFDTQNNISTMSAEWVSKANAKQRKGRAGRVQPGHCYHLYNGLRASLLDDYQLPEILRTPLEELCLQIKILRLGGIAYFLSRLMDPPSNEAVVLSIKHLMELSALDKQEELTPLGVHLARLPVEPHIGKMILFGALFCCLDPVLTIAASLSFKDPFVIPLGKEKIADARRKELAKETRSDHLTVVNAFEGWEEAKRRGFRYEKDYCWEYFLSSNTLQMLHNMKGQFAEHLLGAGFVSSRSPKDPKANINSDNEKIIKAVICAGLYPKVAKIRLNLGKKRKMVKVHTKSDGLVSIHPKSVNVEQTDFHYNWLIYHLKMRTSSIYLYDCTEVSPYCLLFFGGDISIQKDKDQEIIAVDEWIVFQSPERIAHLVKGLRKELDSLLQEKIESPHPVDWDDTKSRDCAVLSAILDLIKTQEKATPRNLPPRSQDGYYS</sequence>